<feature type="chain" id="PRO_1000127900" description="ATP synthase epsilon chain">
    <location>
        <begin position="1"/>
        <end position="138"/>
    </location>
</feature>
<sequence>MTQMTVQVVTPDGIKYDHHAKCISVTTPDGEMGILPNHINLIAPLQVHEMKIRRGGEDEKVDWIAINGGIIEIKDNVVTVVADSAERDRDIDVSRAERAKLRAEREIAQAETTHNIDEVRRAKVALRRALNRINVSKK</sequence>
<proteinExistence type="inferred from homology"/>
<keyword id="KW-0066">ATP synthesis</keyword>
<keyword id="KW-1003">Cell membrane</keyword>
<keyword id="KW-0139">CF(1)</keyword>
<keyword id="KW-0375">Hydrogen ion transport</keyword>
<keyword id="KW-0406">Ion transport</keyword>
<keyword id="KW-0472">Membrane</keyword>
<keyword id="KW-0813">Transport</keyword>
<reference key="1">
    <citation type="journal article" date="2008" name="J. Bacteriol.">
        <title>Genome sequence of a nephritogenic and highly transformable M49 strain of Streptococcus pyogenes.</title>
        <authorList>
            <person name="McShan W.M."/>
            <person name="Ferretti J.J."/>
            <person name="Karasawa T."/>
            <person name="Suvorov A.N."/>
            <person name="Lin S."/>
            <person name="Qin B."/>
            <person name="Jia H."/>
            <person name="Kenton S."/>
            <person name="Najar F."/>
            <person name="Wu H."/>
            <person name="Scott J."/>
            <person name="Roe B.A."/>
            <person name="Savic D.J."/>
        </authorList>
    </citation>
    <scope>NUCLEOTIDE SEQUENCE [LARGE SCALE GENOMIC DNA]</scope>
    <source>
        <strain>NZ131</strain>
    </source>
</reference>
<comment type="function">
    <text evidence="1">Produces ATP from ADP in the presence of a proton gradient across the membrane.</text>
</comment>
<comment type="subunit">
    <text evidence="1">F-type ATPases have 2 components, CF(1) - the catalytic core - and CF(0) - the membrane proton channel. CF(1) has five subunits: alpha(3), beta(3), gamma(1), delta(1), epsilon(1). CF(0) has three main subunits: a, b and c.</text>
</comment>
<comment type="subcellular location">
    <subcellularLocation>
        <location evidence="1">Cell membrane</location>
        <topology evidence="1">Peripheral membrane protein</topology>
    </subcellularLocation>
</comment>
<comment type="similarity">
    <text evidence="1">Belongs to the ATPase epsilon chain family.</text>
</comment>
<organism>
    <name type="scientific">Streptococcus pyogenes serotype M49 (strain NZ131)</name>
    <dbReference type="NCBI Taxonomy" id="471876"/>
    <lineage>
        <taxon>Bacteria</taxon>
        <taxon>Bacillati</taxon>
        <taxon>Bacillota</taxon>
        <taxon>Bacilli</taxon>
        <taxon>Lactobacillales</taxon>
        <taxon>Streptococcaceae</taxon>
        <taxon>Streptococcus</taxon>
    </lineage>
</organism>
<name>ATPE_STRPZ</name>
<accession>B5XKQ2</accession>
<evidence type="ECO:0000255" key="1">
    <source>
        <dbReference type="HAMAP-Rule" id="MF_00530"/>
    </source>
</evidence>
<protein>
    <recommendedName>
        <fullName evidence="1">ATP synthase epsilon chain</fullName>
    </recommendedName>
    <alternativeName>
        <fullName evidence="1">ATP synthase F1 sector epsilon subunit</fullName>
    </alternativeName>
    <alternativeName>
        <fullName evidence="1">F-ATPase epsilon subunit</fullName>
    </alternativeName>
</protein>
<gene>
    <name evidence="1" type="primary">atpC</name>
    <name type="ordered locus">Spy49_0589</name>
</gene>
<dbReference type="EMBL" id="CP000829">
    <property type="protein sequence ID" value="ACI60914.1"/>
    <property type="molecule type" value="Genomic_DNA"/>
</dbReference>
<dbReference type="SMR" id="B5XKQ2"/>
<dbReference type="KEGG" id="soz:Spy49_0589"/>
<dbReference type="HOGENOM" id="CLU_084338_1_0_9"/>
<dbReference type="Proteomes" id="UP000001039">
    <property type="component" value="Chromosome"/>
</dbReference>
<dbReference type="GO" id="GO:0005886">
    <property type="term" value="C:plasma membrane"/>
    <property type="evidence" value="ECO:0007669"/>
    <property type="project" value="UniProtKB-SubCell"/>
</dbReference>
<dbReference type="GO" id="GO:0045259">
    <property type="term" value="C:proton-transporting ATP synthase complex"/>
    <property type="evidence" value="ECO:0007669"/>
    <property type="project" value="UniProtKB-KW"/>
</dbReference>
<dbReference type="GO" id="GO:0005524">
    <property type="term" value="F:ATP binding"/>
    <property type="evidence" value="ECO:0007669"/>
    <property type="project" value="UniProtKB-UniRule"/>
</dbReference>
<dbReference type="GO" id="GO:0046933">
    <property type="term" value="F:proton-transporting ATP synthase activity, rotational mechanism"/>
    <property type="evidence" value="ECO:0007669"/>
    <property type="project" value="UniProtKB-UniRule"/>
</dbReference>
<dbReference type="CDD" id="cd12152">
    <property type="entry name" value="F1-ATPase_delta"/>
    <property type="match status" value="1"/>
</dbReference>
<dbReference type="Gene3D" id="1.20.5.440">
    <property type="entry name" value="ATP synthase delta/epsilon subunit, C-terminal domain"/>
    <property type="match status" value="1"/>
</dbReference>
<dbReference type="Gene3D" id="2.60.15.10">
    <property type="entry name" value="F0F1 ATP synthase delta/epsilon subunit, N-terminal"/>
    <property type="match status" value="1"/>
</dbReference>
<dbReference type="HAMAP" id="MF_00530">
    <property type="entry name" value="ATP_synth_epsil_bac"/>
    <property type="match status" value="1"/>
</dbReference>
<dbReference type="InterPro" id="IPR001469">
    <property type="entry name" value="ATP_synth_F1_dsu/esu"/>
</dbReference>
<dbReference type="InterPro" id="IPR020546">
    <property type="entry name" value="ATP_synth_F1_dsu/esu_N"/>
</dbReference>
<dbReference type="InterPro" id="IPR020547">
    <property type="entry name" value="ATP_synth_F1_esu_C"/>
</dbReference>
<dbReference type="InterPro" id="IPR036771">
    <property type="entry name" value="ATPsynth_dsu/esu_N"/>
</dbReference>
<dbReference type="NCBIfam" id="TIGR01216">
    <property type="entry name" value="ATP_synt_epsi"/>
    <property type="match status" value="1"/>
</dbReference>
<dbReference type="NCBIfam" id="NF001846">
    <property type="entry name" value="PRK00571.1-3"/>
    <property type="match status" value="1"/>
</dbReference>
<dbReference type="PANTHER" id="PTHR13822">
    <property type="entry name" value="ATP SYNTHASE DELTA/EPSILON CHAIN"/>
    <property type="match status" value="1"/>
</dbReference>
<dbReference type="PANTHER" id="PTHR13822:SF10">
    <property type="entry name" value="ATP SYNTHASE EPSILON CHAIN, CHLOROPLASTIC"/>
    <property type="match status" value="1"/>
</dbReference>
<dbReference type="Pfam" id="PF00401">
    <property type="entry name" value="ATP-synt_DE"/>
    <property type="match status" value="1"/>
</dbReference>
<dbReference type="Pfam" id="PF02823">
    <property type="entry name" value="ATP-synt_DE_N"/>
    <property type="match status" value="1"/>
</dbReference>
<dbReference type="SUPFAM" id="SSF51344">
    <property type="entry name" value="Epsilon subunit of F1F0-ATP synthase N-terminal domain"/>
    <property type="match status" value="1"/>
</dbReference>